<protein>
    <recommendedName>
        <fullName evidence="1">UDP-N-acetylglucosamine 1-carboxyvinyltransferase 2</fullName>
        <ecNumber evidence="1">2.5.1.7</ecNumber>
    </recommendedName>
    <alternativeName>
        <fullName evidence="1">Enoylpyruvate transferase 2</fullName>
    </alternativeName>
    <alternativeName>
        <fullName evidence="1">UDP-N-acetylglucosamine enolpyruvyl transferase 2</fullName>
        <shortName evidence="1">EPT 2</shortName>
    </alternativeName>
</protein>
<name>MURA2_STRMU</name>
<dbReference type="EC" id="2.5.1.7" evidence="1"/>
<dbReference type="EMBL" id="AE014133">
    <property type="protein sequence ID" value="AAN59217.1"/>
    <property type="molecule type" value="Genomic_DNA"/>
</dbReference>
<dbReference type="RefSeq" id="NP_721911.1">
    <property type="nucleotide sequence ID" value="NC_004350.2"/>
</dbReference>
<dbReference type="RefSeq" id="WP_002262980.1">
    <property type="nucleotide sequence ID" value="NC_004350.2"/>
</dbReference>
<dbReference type="SMR" id="Q8DT24"/>
<dbReference type="STRING" id="210007.SMU_1572"/>
<dbReference type="KEGG" id="smu:SMU_1572"/>
<dbReference type="PATRIC" id="fig|210007.7.peg.1399"/>
<dbReference type="eggNOG" id="COG0766">
    <property type="taxonomic scope" value="Bacteria"/>
</dbReference>
<dbReference type="HOGENOM" id="CLU_027387_0_0_9"/>
<dbReference type="OrthoDB" id="9803760at2"/>
<dbReference type="PhylomeDB" id="Q8DT24"/>
<dbReference type="UniPathway" id="UPA00219"/>
<dbReference type="Proteomes" id="UP000002512">
    <property type="component" value="Chromosome"/>
</dbReference>
<dbReference type="GO" id="GO:0005737">
    <property type="term" value="C:cytoplasm"/>
    <property type="evidence" value="ECO:0007669"/>
    <property type="project" value="UniProtKB-SubCell"/>
</dbReference>
<dbReference type="GO" id="GO:0008760">
    <property type="term" value="F:UDP-N-acetylglucosamine 1-carboxyvinyltransferase activity"/>
    <property type="evidence" value="ECO:0007669"/>
    <property type="project" value="UniProtKB-UniRule"/>
</dbReference>
<dbReference type="GO" id="GO:0051301">
    <property type="term" value="P:cell division"/>
    <property type="evidence" value="ECO:0007669"/>
    <property type="project" value="UniProtKB-KW"/>
</dbReference>
<dbReference type="GO" id="GO:0071555">
    <property type="term" value="P:cell wall organization"/>
    <property type="evidence" value="ECO:0007669"/>
    <property type="project" value="UniProtKB-KW"/>
</dbReference>
<dbReference type="GO" id="GO:0009252">
    <property type="term" value="P:peptidoglycan biosynthetic process"/>
    <property type="evidence" value="ECO:0007669"/>
    <property type="project" value="UniProtKB-UniRule"/>
</dbReference>
<dbReference type="GO" id="GO:0008360">
    <property type="term" value="P:regulation of cell shape"/>
    <property type="evidence" value="ECO:0007669"/>
    <property type="project" value="UniProtKB-KW"/>
</dbReference>
<dbReference type="GO" id="GO:0019277">
    <property type="term" value="P:UDP-N-acetylgalactosamine biosynthetic process"/>
    <property type="evidence" value="ECO:0007669"/>
    <property type="project" value="InterPro"/>
</dbReference>
<dbReference type="CDD" id="cd01555">
    <property type="entry name" value="UdpNAET"/>
    <property type="match status" value="1"/>
</dbReference>
<dbReference type="FunFam" id="3.65.10.10:FF:000001">
    <property type="entry name" value="UDP-N-acetylglucosamine 1-carboxyvinyltransferase"/>
    <property type="match status" value="1"/>
</dbReference>
<dbReference type="Gene3D" id="3.65.10.10">
    <property type="entry name" value="Enolpyruvate transferase domain"/>
    <property type="match status" value="2"/>
</dbReference>
<dbReference type="HAMAP" id="MF_00111">
    <property type="entry name" value="MurA"/>
    <property type="match status" value="1"/>
</dbReference>
<dbReference type="InterPro" id="IPR001986">
    <property type="entry name" value="Enolpyruvate_Tfrase_dom"/>
</dbReference>
<dbReference type="InterPro" id="IPR036968">
    <property type="entry name" value="Enolpyruvate_Tfrase_sf"/>
</dbReference>
<dbReference type="InterPro" id="IPR050068">
    <property type="entry name" value="MurA_subfamily"/>
</dbReference>
<dbReference type="InterPro" id="IPR013792">
    <property type="entry name" value="RNA3'P_cycl/enolpyr_Trfase_a/b"/>
</dbReference>
<dbReference type="InterPro" id="IPR005750">
    <property type="entry name" value="UDP_GlcNAc_COvinyl_MurA"/>
</dbReference>
<dbReference type="NCBIfam" id="TIGR01072">
    <property type="entry name" value="murA"/>
    <property type="match status" value="1"/>
</dbReference>
<dbReference type="NCBIfam" id="NF006873">
    <property type="entry name" value="PRK09369.1"/>
    <property type="match status" value="1"/>
</dbReference>
<dbReference type="NCBIfam" id="NF009470">
    <property type="entry name" value="PRK12830.1"/>
    <property type="match status" value="1"/>
</dbReference>
<dbReference type="PANTHER" id="PTHR43783">
    <property type="entry name" value="UDP-N-ACETYLGLUCOSAMINE 1-CARBOXYVINYLTRANSFERASE"/>
    <property type="match status" value="1"/>
</dbReference>
<dbReference type="PANTHER" id="PTHR43783:SF2">
    <property type="entry name" value="UDP-N-ACETYLGLUCOSAMINE 1-CARBOXYVINYLTRANSFERASE 2"/>
    <property type="match status" value="1"/>
</dbReference>
<dbReference type="Pfam" id="PF00275">
    <property type="entry name" value="EPSP_synthase"/>
    <property type="match status" value="1"/>
</dbReference>
<dbReference type="SUPFAM" id="SSF55205">
    <property type="entry name" value="EPT/RTPC-like"/>
    <property type="match status" value="1"/>
</dbReference>
<gene>
    <name evidence="1" type="primary">murA2</name>
    <name type="synonym">murZ</name>
    <name type="ordered locus">SMU_1572</name>
</gene>
<accession>Q8DT24</accession>
<keyword id="KW-0131">Cell cycle</keyword>
<keyword id="KW-0132">Cell division</keyword>
<keyword id="KW-0133">Cell shape</keyword>
<keyword id="KW-0961">Cell wall biogenesis/degradation</keyword>
<keyword id="KW-0963">Cytoplasm</keyword>
<keyword id="KW-0573">Peptidoglycan synthesis</keyword>
<keyword id="KW-0670">Pyruvate</keyword>
<keyword id="KW-1185">Reference proteome</keyword>
<keyword id="KW-0808">Transferase</keyword>
<comment type="function">
    <text evidence="1">Cell wall formation. Adds enolpyruvyl to UDP-N-acetylglucosamine.</text>
</comment>
<comment type="catalytic activity">
    <reaction evidence="1">
        <text>phosphoenolpyruvate + UDP-N-acetyl-alpha-D-glucosamine = UDP-N-acetyl-3-O-(1-carboxyvinyl)-alpha-D-glucosamine + phosphate</text>
        <dbReference type="Rhea" id="RHEA:18681"/>
        <dbReference type="ChEBI" id="CHEBI:43474"/>
        <dbReference type="ChEBI" id="CHEBI:57705"/>
        <dbReference type="ChEBI" id="CHEBI:58702"/>
        <dbReference type="ChEBI" id="CHEBI:68483"/>
        <dbReference type="EC" id="2.5.1.7"/>
    </reaction>
</comment>
<comment type="pathway">
    <text evidence="1">Cell wall biogenesis; peptidoglycan biosynthesis.</text>
</comment>
<comment type="subcellular location">
    <subcellularLocation>
        <location evidence="1">Cytoplasm</location>
    </subcellularLocation>
</comment>
<comment type="similarity">
    <text evidence="1">Belongs to the EPSP synthase family. MurA subfamily.</text>
</comment>
<organism>
    <name type="scientific">Streptococcus mutans serotype c (strain ATCC 700610 / UA159)</name>
    <dbReference type="NCBI Taxonomy" id="210007"/>
    <lineage>
        <taxon>Bacteria</taxon>
        <taxon>Bacillati</taxon>
        <taxon>Bacillota</taxon>
        <taxon>Bacilli</taxon>
        <taxon>Lactobacillales</taxon>
        <taxon>Streptococcaceae</taxon>
        <taxon>Streptococcus</taxon>
    </lineage>
</organism>
<proteinExistence type="inferred from homology"/>
<sequence>MRKIVINGGKPLKGEVAVSGAKNSVVALIPAIILADDIVTLDGVPAISDVDSLIDIMTLMGASVECDGDSLKIDPRGVKDIPMPYGKINSLRASYYFYSSLLGRFGRAVVGLPGGCDLGPRPIDLHLKAFKAMGATVSYEGEAMRLSTEGKPLKGAHIYMDTVSVGATINTMIAASKAQGRTVIENAAREPEIIDIATLLNNMGAHIRGAGTDMIIIEGVEKLHGTRHQVIPDRIEAGSYIALAAAVGEGIKVTNVLYEHLESFISKLEEMGVRMTIEEDSVFVEKQDKLKAVSIKTSPYPGFATDLQQPITPLLLTAVGRGKIRDTIYEKRVNHVAELARMGAKISVLGGQIIYEGPNELSGAPVKATDLRAGAALVTAGLMAKGQTVITNIEFILRGYSDIIQKLNRLGADIEIVEE</sequence>
<evidence type="ECO:0000255" key="1">
    <source>
        <dbReference type="HAMAP-Rule" id="MF_00111"/>
    </source>
</evidence>
<reference key="1">
    <citation type="journal article" date="2002" name="Proc. Natl. Acad. Sci. U.S.A.">
        <title>Genome sequence of Streptococcus mutans UA159, a cariogenic dental pathogen.</title>
        <authorList>
            <person name="Ajdic D.J."/>
            <person name="McShan W.M."/>
            <person name="McLaughlin R.E."/>
            <person name="Savic G."/>
            <person name="Chang J."/>
            <person name="Carson M.B."/>
            <person name="Primeaux C."/>
            <person name="Tian R."/>
            <person name="Kenton S."/>
            <person name="Jia H.G."/>
            <person name="Lin S.P."/>
            <person name="Qian Y."/>
            <person name="Li S."/>
            <person name="Zhu H."/>
            <person name="Najar F.Z."/>
            <person name="Lai H."/>
            <person name="White J."/>
            <person name="Roe B.A."/>
            <person name="Ferretti J.J."/>
        </authorList>
    </citation>
    <scope>NUCLEOTIDE SEQUENCE [LARGE SCALE GENOMIC DNA]</scope>
    <source>
        <strain>ATCC 700610 / UA159</strain>
    </source>
</reference>
<feature type="chain" id="PRO_0000231277" description="UDP-N-acetylglucosamine 1-carboxyvinyltransferase 2">
    <location>
        <begin position="1"/>
        <end position="419"/>
    </location>
</feature>
<feature type="active site" description="Proton donor" evidence="1">
    <location>
        <position position="116"/>
    </location>
</feature>
<feature type="binding site" evidence="1">
    <location>
        <begin position="22"/>
        <end position="23"/>
    </location>
    <ligand>
        <name>phosphoenolpyruvate</name>
        <dbReference type="ChEBI" id="CHEBI:58702"/>
    </ligand>
</feature>
<feature type="binding site" evidence="1">
    <location>
        <position position="92"/>
    </location>
    <ligand>
        <name>UDP-N-acetyl-alpha-D-glucosamine</name>
        <dbReference type="ChEBI" id="CHEBI:57705"/>
    </ligand>
</feature>
<feature type="binding site" evidence="1">
    <location>
        <begin position="121"/>
        <end position="125"/>
    </location>
    <ligand>
        <name>UDP-N-acetyl-alpha-D-glucosamine</name>
        <dbReference type="ChEBI" id="CHEBI:57705"/>
    </ligand>
</feature>
<feature type="binding site" evidence="1">
    <location>
        <position position="306"/>
    </location>
    <ligand>
        <name>UDP-N-acetyl-alpha-D-glucosamine</name>
        <dbReference type="ChEBI" id="CHEBI:57705"/>
    </ligand>
</feature>
<feature type="binding site" evidence="1">
    <location>
        <position position="328"/>
    </location>
    <ligand>
        <name>UDP-N-acetyl-alpha-D-glucosamine</name>
        <dbReference type="ChEBI" id="CHEBI:57705"/>
    </ligand>
</feature>
<feature type="modified residue" description="2-(S-cysteinyl)pyruvic acid O-phosphothioketal" evidence="1">
    <location>
        <position position="116"/>
    </location>
</feature>